<feature type="chain" id="PRO_1000095083" description="Elongation factor Tu">
    <location>
        <begin position="1"/>
        <end position="396"/>
    </location>
</feature>
<feature type="domain" description="tr-type G">
    <location>
        <begin position="10"/>
        <end position="206"/>
    </location>
</feature>
<feature type="region of interest" description="G1" evidence="1">
    <location>
        <begin position="19"/>
        <end position="26"/>
    </location>
</feature>
<feature type="region of interest" description="G2" evidence="1">
    <location>
        <begin position="60"/>
        <end position="64"/>
    </location>
</feature>
<feature type="region of interest" description="G3" evidence="1">
    <location>
        <begin position="81"/>
        <end position="84"/>
    </location>
</feature>
<feature type="region of interest" description="G4" evidence="1">
    <location>
        <begin position="136"/>
        <end position="139"/>
    </location>
</feature>
<feature type="region of interest" description="G5" evidence="1">
    <location>
        <begin position="174"/>
        <end position="176"/>
    </location>
</feature>
<feature type="binding site" evidence="2">
    <location>
        <begin position="19"/>
        <end position="26"/>
    </location>
    <ligand>
        <name>GTP</name>
        <dbReference type="ChEBI" id="CHEBI:37565"/>
    </ligand>
</feature>
<feature type="binding site" evidence="2">
    <location>
        <position position="26"/>
    </location>
    <ligand>
        <name>Mg(2+)</name>
        <dbReference type="ChEBI" id="CHEBI:18420"/>
    </ligand>
</feature>
<feature type="binding site" evidence="2">
    <location>
        <begin position="81"/>
        <end position="85"/>
    </location>
    <ligand>
        <name>GTP</name>
        <dbReference type="ChEBI" id="CHEBI:37565"/>
    </ligand>
</feature>
<feature type="binding site" evidence="2">
    <location>
        <begin position="136"/>
        <end position="139"/>
    </location>
    <ligand>
        <name>GTP</name>
        <dbReference type="ChEBI" id="CHEBI:37565"/>
    </ligand>
</feature>
<name>EFTU_AFIC5</name>
<organism>
    <name type="scientific">Afipia carboxidovorans (strain ATCC 49405 / DSM 1227 / KCTC 32145 / OM5)</name>
    <name type="common">Oligotropha carboxidovorans</name>
    <dbReference type="NCBI Taxonomy" id="504832"/>
    <lineage>
        <taxon>Bacteria</taxon>
        <taxon>Pseudomonadati</taxon>
        <taxon>Pseudomonadota</taxon>
        <taxon>Alphaproteobacteria</taxon>
        <taxon>Hyphomicrobiales</taxon>
        <taxon>Nitrobacteraceae</taxon>
        <taxon>Afipia</taxon>
    </lineage>
</organism>
<evidence type="ECO:0000250" key="1"/>
<evidence type="ECO:0000255" key="2">
    <source>
        <dbReference type="HAMAP-Rule" id="MF_00118"/>
    </source>
</evidence>
<accession>B6JET1</accession>
<accession>F8BZC9</accession>
<protein>
    <recommendedName>
        <fullName evidence="2">Elongation factor Tu</fullName>
        <shortName evidence="2">EF-Tu</shortName>
        <ecNumber evidence="2">3.6.5.3</ecNumber>
    </recommendedName>
</protein>
<gene>
    <name evidence="2" type="primary">tuf</name>
    <name type="ordered locus">OCAR_5675</name>
    <name type="ordered locus">OCA5_c23320</name>
</gene>
<dbReference type="EC" id="3.6.5.3" evidence="2"/>
<dbReference type="EMBL" id="CP001196">
    <property type="protein sequence ID" value="ACI92803.1"/>
    <property type="molecule type" value="Genomic_DNA"/>
</dbReference>
<dbReference type="EMBL" id="CP002826">
    <property type="protein sequence ID" value="AEI07032.1"/>
    <property type="molecule type" value="Genomic_DNA"/>
</dbReference>
<dbReference type="RefSeq" id="WP_012562832.1">
    <property type="nucleotide sequence ID" value="NC_015684.1"/>
</dbReference>
<dbReference type="SMR" id="B6JET1"/>
<dbReference type="STRING" id="504832.OCA5_c23320"/>
<dbReference type="KEGG" id="oca:OCAR_5675"/>
<dbReference type="KEGG" id="ocg:OCA5_c23320"/>
<dbReference type="PATRIC" id="fig|504832.7.peg.2457"/>
<dbReference type="eggNOG" id="COG0050">
    <property type="taxonomic scope" value="Bacteria"/>
</dbReference>
<dbReference type="HOGENOM" id="CLU_007265_0_0_5"/>
<dbReference type="OrthoDB" id="9803139at2"/>
<dbReference type="Proteomes" id="UP000007730">
    <property type="component" value="Chromosome"/>
</dbReference>
<dbReference type="GO" id="GO:0005829">
    <property type="term" value="C:cytosol"/>
    <property type="evidence" value="ECO:0007669"/>
    <property type="project" value="TreeGrafter"/>
</dbReference>
<dbReference type="GO" id="GO:0005525">
    <property type="term" value="F:GTP binding"/>
    <property type="evidence" value="ECO:0007669"/>
    <property type="project" value="UniProtKB-UniRule"/>
</dbReference>
<dbReference type="GO" id="GO:0003924">
    <property type="term" value="F:GTPase activity"/>
    <property type="evidence" value="ECO:0007669"/>
    <property type="project" value="InterPro"/>
</dbReference>
<dbReference type="GO" id="GO:0097216">
    <property type="term" value="F:guanosine tetraphosphate binding"/>
    <property type="evidence" value="ECO:0007669"/>
    <property type="project" value="UniProtKB-ARBA"/>
</dbReference>
<dbReference type="GO" id="GO:0003746">
    <property type="term" value="F:translation elongation factor activity"/>
    <property type="evidence" value="ECO:0007669"/>
    <property type="project" value="UniProtKB-UniRule"/>
</dbReference>
<dbReference type="CDD" id="cd01884">
    <property type="entry name" value="EF_Tu"/>
    <property type="match status" value="1"/>
</dbReference>
<dbReference type="CDD" id="cd03697">
    <property type="entry name" value="EFTU_II"/>
    <property type="match status" value="1"/>
</dbReference>
<dbReference type="CDD" id="cd03707">
    <property type="entry name" value="EFTU_III"/>
    <property type="match status" value="1"/>
</dbReference>
<dbReference type="FunFam" id="2.40.30.10:FF:000001">
    <property type="entry name" value="Elongation factor Tu"/>
    <property type="match status" value="1"/>
</dbReference>
<dbReference type="FunFam" id="3.40.50.300:FF:000003">
    <property type="entry name" value="Elongation factor Tu"/>
    <property type="match status" value="1"/>
</dbReference>
<dbReference type="Gene3D" id="3.40.50.300">
    <property type="entry name" value="P-loop containing nucleotide triphosphate hydrolases"/>
    <property type="match status" value="1"/>
</dbReference>
<dbReference type="Gene3D" id="2.40.30.10">
    <property type="entry name" value="Translation factors"/>
    <property type="match status" value="2"/>
</dbReference>
<dbReference type="HAMAP" id="MF_00118_B">
    <property type="entry name" value="EF_Tu_B"/>
    <property type="match status" value="1"/>
</dbReference>
<dbReference type="InterPro" id="IPR041709">
    <property type="entry name" value="EF-Tu_GTP-bd"/>
</dbReference>
<dbReference type="InterPro" id="IPR050055">
    <property type="entry name" value="EF-Tu_GTPase"/>
</dbReference>
<dbReference type="InterPro" id="IPR004161">
    <property type="entry name" value="EFTu-like_2"/>
</dbReference>
<dbReference type="InterPro" id="IPR033720">
    <property type="entry name" value="EFTU_2"/>
</dbReference>
<dbReference type="InterPro" id="IPR031157">
    <property type="entry name" value="G_TR_CS"/>
</dbReference>
<dbReference type="InterPro" id="IPR027417">
    <property type="entry name" value="P-loop_NTPase"/>
</dbReference>
<dbReference type="InterPro" id="IPR005225">
    <property type="entry name" value="Small_GTP-bd"/>
</dbReference>
<dbReference type="InterPro" id="IPR000795">
    <property type="entry name" value="T_Tr_GTP-bd_dom"/>
</dbReference>
<dbReference type="InterPro" id="IPR009000">
    <property type="entry name" value="Transl_B-barrel_sf"/>
</dbReference>
<dbReference type="InterPro" id="IPR009001">
    <property type="entry name" value="Transl_elong_EF1A/Init_IF2_C"/>
</dbReference>
<dbReference type="InterPro" id="IPR004541">
    <property type="entry name" value="Transl_elong_EFTu/EF1A_bac/org"/>
</dbReference>
<dbReference type="InterPro" id="IPR004160">
    <property type="entry name" value="Transl_elong_EFTu/EF1A_C"/>
</dbReference>
<dbReference type="NCBIfam" id="TIGR00485">
    <property type="entry name" value="EF-Tu"/>
    <property type="match status" value="1"/>
</dbReference>
<dbReference type="NCBIfam" id="NF000766">
    <property type="entry name" value="PRK00049.1"/>
    <property type="match status" value="1"/>
</dbReference>
<dbReference type="NCBIfam" id="NF009372">
    <property type="entry name" value="PRK12735.1"/>
    <property type="match status" value="1"/>
</dbReference>
<dbReference type="NCBIfam" id="NF009373">
    <property type="entry name" value="PRK12736.1"/>
    <property type="match status" value="1"/>
</dbReference>
<dbReference type="NCBIfam" id="TIGR00231">
    <property type="entry name" value="small_GTP"/>
    <property type="match status" value="1"/>
</dbReference>
<dbReference type="PANTHER" id="PTHR43721:SF22">
    <property type="entry name" value="ELONGATION FACTOR TU, MITOCHONDRIAL"/>
    <property type="match status" value="1"/>
</dbReference>
<dbReference type="PANTHER" id="PTHR43721">
    <property type="entry name" value="ELONGATION FACTOR TU-RELATED"/>
    <property type="match status" value="1"/>
</dbReference>
<dbReference type="Pfam" id="PF00009">
    <property type="entry name" value="GTP_EFTU"/>
    <property type="match status" value="1"/>
</dbReference>
<dbReference type="Pfam" id="PF03144">
    <property type="entry name" value="GTP_EFTU_D2"/>
    <property type="match status" value="1"/>
</dbReference>
<dbReference type="Pfam" id="PF03143">
    <property type="entry name" value="GTP_EFTU_D3"/>
    <property type="match status" value="1"/>
</dbReference>
<dbReference type="PRINTS" id="PR00315">
    <property type="entry name" value="ELONGATNFCT"/>
</dbReference>
<dbReference type="SUPFAM" id="SSF50465">
    <property type="entry name" value="EF-Tu/eEF-1alpha/eIF2-gamma C-terminal domain"/>
    <property type="match status" value="1"/>
</dbReference>
<dbReference type="SUPFAM" id="SSF52540">
    <property type="entry name" value="P-loop containing nucleoside triphosphate hydrolases"/>
    <property type="match status" value="1"/>
</dbReference>
<dbReference type="SUPFAM" id="SSF50447">
    <property type="entry name" value="Translation proteins"/>
    <property type="match status" value="1"/>
</dbReference>
<dbReference type="PROSITE" id="PS00301">
    <property type="entry name" value="G_TR_1"/>
    <property type="match status" value="1"/>
</dbReference>
<dbReference type="PROSITE" id="PS51722">
    <property type="entry name" value="G_TR_2"/>
    <property type="match status" value="1"/>
</dbReference>
<comment type="function">
    <text evidence="2">GTP hydrolase that promotes the GTP-dependent binding of aminoacyl-tRNA to the A-site of ribosomes during protein biosynthesis.</text>
</comment>
<comment type="catalytic activity">
    <reaction evidence="2">
        <text>GTP + H2O = GDP + phosphate + H(+)</text>
        <dbReference type="Rhea" id="RHEA:19669"/>
        <dbReference type="ChEBI" id="CHEBI:15377"/>
        <dbReference type="ChEBI" id="CHEBI:15378"/>
        <dbReference type="ChEBI" id="CHEBI:37565"/>
        <dbReference type="ChEBI" id="CHEBI:43474"/>
        <dbReference type="ChEBI" id="CHEBI:58189"/>
        <dbReference type="EC" id="3.6.5.3"/>
    </reaction>
    <physiologicalReaction direction="left-to-right" evidence="2">
        <dbReference type="Rhea" id="RHEA:19670"/>
    </physiologicalReaction>
</comment>
<comment type="subunit">
    <text evidence="2">Monomer.</text>
</comment>
<comment type="subcellular location">
    <subcellularLocation>
        <location evidence="2">Cytoplasm</location>
    </subcellularLocation>
</comment>
<comment type="similarity">
    <text evidence="2">Belongs to the TRAFAC class translation factor GTPase superfamily. Classic translation factor GTPase family. EF-Tu/EF-1A subfamily.</text>
</comment>
<sequence>MAKEKFERKKPHCNIGTIGHVDHGKTSLTAAITKVLAEAGGATFTAYDQIDKAPEEKARGITISTSHVEYETPNRHYAHVDCPGHADYVKNMITGAAQMDGAILVVSAADGPMPQTREHILLARQVGVPAIVVFLNKCDMVDDPELLELVELEVRELLSKYNFPGDKIPIIKGSALAALENSDEKLGRDAVLELMKNVDEYIPQPERPVDQPFLMPVEDVFSISGRGTVVTGRVERGIVKVGEEIEIVGIRPTQKTTVTGVEMFRKLLDQGQAGDNIGALLRGTKREDVERGQVLCKPGSVKPHTKFKAEAYILTKEEGGRHTPFFTNYRPQFYFRTTDVTGVVHLPEGTEMVMPGDNIAMEVHLIVPIAMEEKLRFAIREGGRTVGAGVVASIIE</sequence>
<reference key="1">
    <citation type="journal article" date="2008" name="J. Bacteriol.">
        <title>Genome sequence of the chemolithoautotrophic bacterium Oligotropha carboxidovorans OM5T.</title>
        <authorList>
            <person name="Paul D."/>
            <person name="Bridges S."/>
            <person name="Burgess S.C."/>
            <person name="Dandass Y."/>
            <person name="Lawrence M.L."/>
        </authorList>
    </citation>
    <scope>NUCLEOTIDE SEQUENCE [LARGE SCALE GENOMIC DNA]</scope>
    <source>
        <strain>ATCC 49405 / DSM 1227 / KCTC 32145 / OM5</strain>
    </source>
</reference>
<reference key="2">
    <citation type="journal article" date="2011" name="J. Bacteriol.">
        <title>Complete genome sequences of the chemolithoautotrophic Oligotropha carboxidovorans strains OM4 and OM5.</title>
        <authorList>
            <person name="Volland S."/>
            <person name="Rachinger M."/>
            <person name="Strittmatter A."/>
            <person name="Daniel R."/>
            <person name="Gottschalk G."/>
            <person name="Meyer O."/>
        </authorList>
    </citation>
    <scope>NUCLEOTIDE SEQUENCE [LARGE SCALE GENOMIC DNA]</scope>
    <source>
        <strain>ATCC 49405 / DSM 1227 / KCTC 32145 / OM5</strain>
    </source>
</reference>
<keyword id="KW-0963">Cytoplasm</keyword>
<keyword id="KW-0251">Elongation factor</keyword>
<keyword id="KW-0342">GTP-binding</keyword>
<keyword id="KW-0378">Hydrolase</keyword>
<keyword id="KW-0460">Magnesium</keyword>
<keyword id="KW-0479">Metal-binding</keyword>
<keyword id="KW-0547">Nucleotide-binding</keyword>
<keyword id="KW-0648">Protein biosynthesis</keyword>
<keyword id="KW-1185">Reference proteome</keyword>
<proteinExistence type="inferred from homology"/>